<comment type="function">
    <text evidence="2 3">Hormone receptor primarily expressed in adrenal cortex that plays a key role in regulating adrenocortical function (By similarity). Upon corticotropin (ACTH) binding, facilitates the release of adrenal glucocorticoids, including cortisol and corticosterone. In addition, MC2R is required for fetal and neonatal adrenal gland development (By similarity). Mechanistically, activates adenylate cyclase (cAMP), the MAPK cascade as well as the cAMP-dependent protein kinase A pathway leading to steroidogenic factor 1/NR5A1-mediated transcriptional activation (By similarity).</text>
</comment>
<comment type="subunit">
    <text evidence="2">Homodimer. Interacts with corticotropin (ACTH). Interacts with MRAP; this interaction targets MC2R to the plasma membrane. Interacts with MRAP2; competing with MRAP for binding to MC2R and impairing the binding of corticotropin (ACTH).</text>
</comment>
<comment type="subcellular location">
    <subcellularLocation>
        <location evidence="2">Cell membrane</location>
        <topology evidence="2">Multi-pass membrane protein</topology>
    </subcellularLocation>
</comment>
<comment type="PTM">
    <text evidence="2">Ubiquitinated by MGRN1 that may be involved in post-endocytic trafficking and/or degradation of internalized receptor.</text>
</comment>
<comment type="similarity">
    <text evidence="5">Belongs to the G-protein coupled receptor 1 family.</text>
</comment>
<name>ACTHR_MESAU</name>
<accession>P70115</accession>
<reference key="1">
    <citation type="submission" date="1996-10" db="EMBL/GenBank/DDBJ databases">
        <authorList>
            <person name="Fleury A."/>
            <person name="Cloutier M."/>
            <person name="Ducharme L."/>
            <person name="LeHoux J.-G."/>
        </authorList>
    </citation>
    <scope>NUCLEOTIDE SEQUENCE [MRNA]</scope>
    <source>
        <tissue>Adrenal gland</tissue>
    </source>
</reference>
<evidence type="ECO:0000250" key="1"/>
<evidence type="ECO:0000250" key="2">
    <source>
        <dbReference type="UniProtKB" id="Q01718"/>
    </source>
</evidence>
<evidence type="ECO:0000250" key="3">
    <source>
        <dbReference type="UniProtKB" id="Q64326"/>
    </source>
</evidence>
<evidence type="ECO:0000255" key="4"/>
<evidence type="ECO:0000255" key="5">
    <source>
        <dbReference type="PROSITE-ProRule" id="PRU00521"/>
    </source>
</evidence>
<keyword id="KW-1003">Cell membrane</keyword>
<keyword id="KW-1015">Disulfide bond</keyword>
<keyword id="KW-0297">G-protein coupled receptor</keyword>
<keyword id="KW-0325">Glycoprotein</keyword>
<keyword id="KW-0449">Lipoprotein</keyword>
<keyword id="KW-0472">Membrane</keyword>
<keyword id="KW-0564">Palmitate</keyword>
<keyword id="KW-0675">Receptor</keyword>
<keyword id="KW-1185">Reference proteome</keyword>
<keyword id="KW-0807">Transducer</keyword>
<keyword id="KW-0812">Transmembrane</keyword>
<keyword id="KW-1133">Transmembrane helix</keyword>
<keyword id="KW-0832">Ubl conjugation</keyword>
<feature type="chain" id="PRO_0000069055" description="Adrenocorticotropic hormone receptor">
    <location>
        <begin position="1"/>
        <end position="297"/>
    </location>
</feature>
<feature type="topological domain" description="Extracellular" evidence="1">
    <location>
        <begin position="1"/>
        <end position="23"/>
    </location>
</feature>
<feature type="transmembrane region" description="Helical; Name=1" evidence="1">
    <location>
        <begin position="24"/>
        <end position="49"/>
    </location>
</feature>
<feature type="topological domain" description="Cytoplasmic" evidence="1">
    <location>
        <begin position="50"/>
        <end position="58"/>
    </location>
</feature>
<feature type="transmembrane region" description="Helical; Name=2" evidence="1">
    <location>
        <begin position="59"/>
        <end position="79"/>
    </location>
</feature>
<feature type="topological domain" description="Extracellular" evidence="1">
    <location>
        <begin position="80"/>
        <end position="104"/>
    </location>
</feature>
<feature type="transmembrane region" description="Helical; Name=3" evidence="1">
    <location>
        <begin position="105"/>
        <end position="126"/>
    </location>
</feature>
<feature type="topological domain" description="Cytoplasmic" evidence="1">
    <location>
        <begin position="127"/>
        <end position="147"/>
    </location>
</feature>
<feature type="transmembrane region" description="Helical; Name=4" evidence="1">
    <location>
        <begin position="148"/>
        <end position="168"/>
    </location>
</feature>
<feature type="topological domain" description="Extracellular" evidence="1">
    <location>
        <begin position="169"/>
        <end position="180"/>
    </location>
</feature>
<feature type="transmembrane region" description="Helical; Name=5" evidence="1">
    <location>
        <begin position="181"/>
        <end position="199"/>
    </location>
</feature>
<feature type="topological domain" description="Cytoplasmic" evidence="1">
    <location>
        <begin position="200"/>
        <end position="217"/>
    </location>
</feature>
<feature type="transmembrane region" description="Helical; Name=6" evidence="1">
    <location>
        <begin position="218"/>
        <end position="244"/>
    </location>
</feature>
<feature type="topological domain" description="Extracellular" evidence="1">
    <location>
        <begin position="245"/>
        <end position="256"/>
    </location>
</feature>
<feature type="transmembrane region" description="Helical; Name=7" evidence="1">
    <location>
        <begin position="257"/>
        <end position="278"/>
    </location>
</feature>
<feature type="topological domain" description="Cytoplasmic" evidence="1">
    <location>
        <begin position="279"/>
        <end position="297"/>
    </location>
</feature>
<feature type="lipid moiety-binding region" description="S-palmitoyl cysteine" evidence="4">
    <location>
        <position position="293"/>
    </location>
</feature>
<feature type="glycosylation site" description="N-linked (GlcNAc...) asparagine" evidence="4">
    <location>
        <position position="12"/>
    </location>
</feature>
<feature type="glycosylation site" description="N-linked (GlcNAc...) asparagine" evidence="4">
    <location>
        <position position="17"/>
    </location>
</feature>
<feature type="disulfide bond" evidence="2">
    <location>
        <begin position="21"/>
        <end position="253"/>
    </location>
</feature>
<feature type="disulfide bond" evidence="2">
    <location>
        <begin position="245"/>
        <end position="251"/>
    </location>
</feature>
<protein>
    <recommendedName>
        <fullName>Adrenocorticotropic hormone receptor</fullName>
        <shortName>ACTH receptor</shortName>
        <shortName>ACTH-R</shortName>
    </recommendedName>
    <alternativeName>
        <fullName>Adrenocorticotropin receptor</fullName>
    </alternativeName>
    <alternativeName>
        <fullName>Melanocortin receptor 2</fullName>
        <shortName>MC2-R</shortName>
    </alternativeName>
</protein>
<sequence>MKHIITPYEHTNDTARNNSDCPDVVLPEEIFFTISIIGVLENLIVLLAVVKNKNLQCPMYFFICSLAISDMLGSLYKILENILIMFRNRGYLQPRGNFESTADDIIDCMFILSLLGSIFSLSVIAADRYITIFHALQYHSIVTMRRTIITLTVIWIFCTGSGIAMVIFSHHVPTVLTFTSLFPLMLVFILCLYIHMFLLARSHARKISTLPRANMKGAITLTILLGVFIFCWAPFILHVLLMTFCPNNPYCVCYMSLFQINGMLIMCNAVIDPFIYAFRSPELRDAFKKMFSCHRYQ</sequence>
<proteinExistence type="evidence at transcript level"/>
<gene>
    <name type="primary">MC2R</name>
</gene>
<organism>
    <name type="scientific">Mesocricetus auratus</name>
    <name type="common">Golden hamster</name>
    <dbReference type="NCBI Taxonomy" id="10036"/>
    <lineage>
        <taxon>Eukaryota</taxon>
        <taxon>Metazoa</taxon>
        <taxon>Chordata</taxon>
        <taxon>Craniata</taxon>
        <taxon>Vertebrata</taxon>
        <taxon>Euteleostomi</taxon>
        <taxon>Mammalia</taxon>
        <taxon>Eutheria</taxon>
        <taxon>Euarchontoglires</taxon>
        <taxon>Glires</taxon>
        <taxon>Rodentia</taxon>
        <taxon>Myomorpha</taxon>
        <taxon>Muroidea</taxon>
        <taxon>Cricetidae</taxon>
        <taxon>Cricetinae</taxon>
        <taxon>Mesocricetus</taxon>
    </lineage>
</organism>
<dbReference type="EMBL" id="U71279">
    <property type="protein sequence ID" value="AAB16806.1"/>
    <property type="molecule type" value="mRNA"/>
</dbReference>
<dbReference type="RefSeq" id="NP_001269227.1">
    <property type="nucleotide sequence ID" value="NM_001282298.1"/>
</dbReference>
<dbReference type="SMR" id="P70115"/>
<dbReference type="STRING" id="10036.ENSMAUP00000018007"/>
<dbReference type="GlyCosmos" id="P70115">
    <property type="glycosylation" value="2 sites, No reported glycans"/>
</dbReference>
<dbReference type="Ensembl" id="ENSMAUT00000021965">
    <property type="protein sequence ID" value="ENSMAUP00000018007"/>
    <property type="gene ID" value="ENSMAUG00000016719"/>
</dbReference>
<dbReference type="GeneID" id="101825745"/>
<dbReference type="KEGG" id="maua:101825745"/>
<dbReference type="CTD" id="4158"/>
<dbReference type="eggNOG" id="KOG3656">
    <property type="taxonomic scope" value="Eukaryota"/>
</dbReference>
<dbReference type="OrthoDB" id="9894375at2759"/>
<dbReference type="Proteomes" id="UP000189706">
    <property type="component" value="Unplaced"/>
</dbReference>
<dbReference type="GO" id="GO:0005886">
    <property type="term" value="C:plasma membrane"/>
    <property type="evidence" value="ECO:0007669"/>
    <property type="project" value="UniProtKB-SubCell"/>
</dbReference>
<dbReference type="GO" id="GO:0004978">
    <property type="term" value="F:corticotropin receptor activity"/>
    <property type="evidence" value="ECO:0007669"/>
    <property type="project" value="InterPro"/>
</dbReference>
<dbReference type="GO" id="GO:0007189">
    <property type="term" value="P:adenylate cyclase-activating G protein-coupled receptor signaling pathway"/>
    <property type="evidence" value="ECO:0007669"/>
    <property type="project" value="Ensembl"/>
</dbReference>
<dbReference type="CDD" id="cd15350">
    <property type="entry name" value="7tmA_MC2R_ACTH_R"/>
    <property type="match status" value="1"/>
</dbReference>
<dbReference type="Gene3D" id="1.20.1070.10">
    <property type="entry name" value="Rhodopsin 7-helix transmembrane proteins"/>
    <property type="match status" value="1"/>
</dbReference>
<dbReference type="InterPro" id="IPR001168">
    <property type="entry name" value="ACTH_rcpt"/>
</dbReference>
<dbReference type="InterPro" id="IPR000276">
    <property type="entry name" value="GPCR_Rhodpsn"/>
</dbReference>
<dbReference type="InterPro" id="IPR017452">
    <property type="entry name" value="GPCR_Rhodpsn_7TM"/>
</dbReference>
<dbReference type="InterPro" id="IPR001671">
    <property type="entry name" value="Melcrt_ACTH_rcpt"/>
</dbReference>
<dbReference type="PANTHER" id="PTHR22750">
    <property type="entry name" value="G-PROTEIN COUPLED RECEPTOR"/>
    <property type="match status" value="1"/>
</dbReference>
<dbReference type="Pfam" id="PF00001">
    <property type="entry name" value="7tm_1"/>
    <property type="match status" value="1"/>
</dbReference>
<dbReference type="PRINTS" id="PR00520">
    <property type="entry name" value="ACTROPHINR"/>
</dbReference>
<dbReference type="PRINTS" id="PR00237">
    <property type="entry name" value="GPCRRHODOPSN"/>
</dbReference>
<dbReference type="PRINTS" id="PR00534">
    <property type="entry name" value="MCRFAMILY"/>
</dbReference>
<dbReference type="SMART" id="SM01381">
    <property type="entry name" value="7TM_GPCR_Srsx"/>
    <property type="match status" value="1"/>
</dbReference>
<dbReference type="SUPFAM" id="SSF81321">
    <property type="entry name" value="Family A G protein-coupled receptor-like"/>
    <property type="match status" value="1"/>
</dbReference>
<dbReference type="PROSITE" id="PS00237">
    <property type="entry name" value="G_PROTEIN_RECEP_F1_1"/>
    <property type="match status" value="1"/>
</dbReference>
<dbReference type="PROSITE" id="PS50262">
    <property type="entry name" value="G_PROTEIN_RECEP_F1_2"/>
    <property type="match status" value="1"/>
</dbReference>